<dbReference type="EC" id="3.1.-.-" evidence="1"/>
<dbReference type="EMBL" id="AM884176">
    <property type="protein sequence ID" value="CAP03875.1"/>
    <property type="molecule type" value="Genomic_DNA"/>
</dbReference>
<dbReference type="RefSeq" id="YP_001654512.1">
    <property type="nucleotide sequence ID" value="NC_010287.1"/>
</dbReference>
<dbReference type="SMR" id="B0B9T4"/>
<dbReference type="KEGG" id="ctb:CTL0436"/>
<dbReference type="PATRIC" id="fig|471472.4.peg.471"/>
<dbReference type="HOGENOM" id="CLU_098240_2_0_0"/>
<dbReference type="Proteomes" id="UP001154402">
    <property type="component" value="Chromosome"/>
</dbReference>
<dbReference type="GO" id="GO:0005829">
    <property type="term" value="C:cytosol"/>
    <property type="evidence" value="ECO:0007669"/>
    <property type="project" value="TreeGrafter"/>
</dbReference>
<dbReference type="GO" id="GO:0004518">
    <property type="term" value="F:nuclease activity"/>
    <property type="evidence" value="ECO:0007669"/>
    <property type="project" value="UniProtKB-KW"/>
</dbReference>
<dbReference type="GO" id="GO:0000967">
    <property type="term" value="P:rRNA 5'-end processing"/>
    <property type="evidence" value="ECO:0007669"/>
    <property type="project" value="UniProtKB-UniRule"/>
</dbReference>
<dbReference type="CDD" id="cd16964">
    <property type="entry name" value="YqgF"/>
    <property type="match status" value="1"/>
</dbReference>
<dbReference type="Gene3D" id="3.30.420.140">
    <property type="entry name" value="YqgF/RNase H-like domain"/>
    <property type="match status" value="1"/>
</dbReference>
<dbReference type="HAMAP" id="MF_00651">
    <property type="entry name" value="Nuclease_YqgF"/>
    <property type="match status" value="1"/>
</dbReference>
<dbReference type="InterPro" id="IPR012337">
    <property type="entry name" value="RNaseH-like_sf"/>
</dbReference>
<dbReference type="InterPro" id="IPR005227">
    <property type="entry name" value="YqgF"/>
</dbReference>
<dbReference type="InterPro" id="IPR006641">
    <property type="entry name" value="YqgF/RNaseH-like_dom"/>
</dbReference>
<dbReference type="InterPro" id="IPR037027">
    <property type="entry name" value="YqgF/RNaseH-like_dom_sf"/>
</dbReference>
<dbReference type="NCBIfam" id="TIGR00250">
    <property type="entry name" value="RNAse_H_YqgF"/>
    <property type="match status" value="1"/>
</dbReference>
<dbReference type="PANTHER" id="PTHR33317">
    <property type="entry name" value="POLYNUCLEOTIDYL TRANSFERASE, RIBONUCLEASE H-LIKE SUPERFAMILY PROTEIN"/>
    <property type="match status" value="1"/>
</dbReference>
<dbReference type="PANTHER" id="PTHR33317:SF4">
    <property type="entry name" value="POLYNUCLEOTIDYL TRANSFERASE, RIBONUCLEASE H-LIKE SUPERFAMILY PROTEIN"/>
    <property type="match status" value="1"/>
</dbReference>
<dbReference type="Pfam" id="PF03652">
    <property type="entry name" value="RuvX"/>
    <property type="match status" value="1"/>
</dbReference>
<dbReference type="SMART" id="SM00732">
    <property type="entry name" value="YqgFc"/>
    <property type="match status" value="1"/>
</dbReference>
<dbReference type="SUPFAM" id="SSF53098">
    <property type="entry name" value="Ribonuclease H-like"/>
    <property type="match status" value="1"/>
</dbReference>
<accession>B0B9T4</accession>
<organism>
    <name type="scientific">Chlamydia trachomatis serovar L2 (strain ATCC VR-902B / DSM 19102 / 434/Bu)</name>
    <dbReference type="NCBI Taxonomy" id="471472"/>
    <lineage>
        <taxon>Bacteria</taxon>
        <taxon>Pseudomonadati</taxon>
        <taxon>Chlamydiota</taxon>
        <taxon>Chlamydiia</taxon>
        <taxon>Chlamydiales</taxon>
        <taxon>Chlamydiaceae</taxon>
        <taxon>Chlamydia/Chlamydophila group</taxon>
        <taxon>Chlamydia</taxon>
    </lineage>
</organism>
<name>YQGF_CHLT2</name>
<gene>
    <name type="ordered locus">CTL0436</name>
</gene>
<reference key="1">
    <citation type="journal article" date="2008" name="Genome Res.">
        <title>Chlamydia trachomatis: genome sequence analysis of lymphogranuloma venereum isolates.</title>
        <authorList>
            <person name="Thomson N.R."/>
            <person name="Holden M.T.G."/>
            <person name="Carder C."/>
            <person name="Lennard N."/>
            <person name="Lockey S.J."/>
            <person name="Marsh P."/>
            <person name="Skipp P."/>
            <person name="O'Connor C.D."/>
            <person name="Goodhead I."/>
            <person name="Norbertzcak H."/>
            <person name="Harris B."/>
            <person name="Ormond D."/>
            <person name="Rance R."/>
            <person name="Quail M.A."/>
            <person name="Parkhill J."/>
            <person name="Stephens R.S."/>
            <person name="Clarke I.N."/>
        </authorList>
    </citation>
    <scope>NUCLEOTIDE SEQUENCE [LARGE SCALE GENOMIC DNA]</scope>
    <source>
        <strain>ATCC VR-902B / DSM 19102 / 434/Bu</strain>
    </source>
</reference>
<comment type="function">
    <text evidence="1">Could be a nuclease involved in processing of the 5'-end of pre-16S rRNA.</text>
</comment>
<comment type="subcellular location">
    <subcellularLocation>
        <location evidence="1">Cytoplasm</location>
    </subcellularLocation>
</comment>
<comment type="similarity">
    <text evidence="1">Belongs to the YqgF nuclease family.</text>
</comment>
<protein>
    <recommendedName>
        <fullName evidence="1">Putative pre-16S rRNA nuclease</fullName>
        <ecNumber evidence="1">3.1.-.-</ecNumber>
    </recommendedName>
</protein>
<evidence type="ECO:0000255" key="1">
    <source>
        <dbReference type="HAMAP-Rule" id="MF_00651"/>
    </source>
</evidence>
<feature type="chain" id="PRO_1000131011" description="Putative pre-16S rRNA nuclease">
    <location>
        <begin position="1"/>
        <end position="148"/>
    </location>
</feature>
<keyword id="KW-0963">Cytoplasm</keyword>
<keyword id="KW-0378">Hydrolase</keyword>
<keyword id="KW-0540">Nuclease</keyword>
<keyword id="KW-0690">Ribosome biogenesis</keyword>
<sequence length="148" mass="16212">MNIAKQQQAFLGIDYGKKRIGLAFASSPLLIPLPIGNVEARSSLTLTAQALVSIIKERAVTTVVFGNPLPMQKAYASSVQSEIQELAALIQEMTAIEVILWDERLSSAQAERMLKSDCGLNRKQRKNSSDSLAATLILSSFLDSRKLY</sequence>
<proteinExistence type="inferred from homology"/>